<name>MDH_LEPBP</name>
<comment type="function">
    <text evidence="1">Catalyzes the reversible oxidation of malate to oxaloacetate.</text>
</comment>
<comment type="catalytic activity">
    <reaction evidence="1">
        <text>(S)-malate + NAD(+) = oxaloacetate + NADH + H(+)</text>
        <dbReference type="Rhea" id="RHEA:21432"/>
        <dbReference type="ChEBI" id="CHEBI:15378"/>
        <dbReference type="ChEBI" id="CHEBI:15589"/>
        <dbReference type="ChEBI" id="CHEBI:16452"/>
        <dbReference type="ChEBI" id="CHEBI:57540"/>
        <dbReference type="ChEBI" id="CHEBI:57945"/>
        <dbReference type="EC" id="1.1.1.37"/>
    </reaction>
</comment>
<comment type="similarity">
    <text evidence="1">Belongs to the LDH/MDH superfamily. MDH type 2 family.</text>
</comment>
<reference key="1">
    <citation type="journal article" date="2008" name="PLoS ONE">
        <title>Genome sequence of the saprophyte Leptospira biflexa provides insights into the evolution of Leptospira and the pathogenesis of leptospirosis.</title>
        <authorList>
            <person name="Picardeau M."/>
            <person name="Bulach D.M."/>
            <person name="Bouchier C."/>
            <person name="Zuerner R.L."/>
            <person name="Zidane N."/>
            <person name="Wilson P.J."/>
            <person name="Creno S."/>
            <person name="Kuczek E.S."/>
            <person name="Bommezzadri S."/>
            <person name="Davis J.C."/>
            <person name="McGrath A."/>
            <person name="Johnson M.J."/>
            <person name="Boursaux-Eude C."/>
            <person name="Seemann T."/>
            <person name="Rouy Z."/>
            <person name="Coppel R.L."/>
            <person name="Rood J.I."/>
            <person name="Lajus A."/>
            <person name="Davies J.K."/>
            <person name="Medigue C."/>
            <person name="Adler B."/>
        </authorList>
    </citation>
    <scope>NUCLEOTIDE SEQUENCE [LARGE SCALE GENOMIC DNA]</scope>
    <source>
        <strain>Patoc 1 / ATCC 23582 / Paris</strain>
    </source>
</reference>
<organism>
    <name type="scientific">Leptospira biflexa serovar Patoc (strain Patoc 1 / ATCC 23582 / Paris)</name>
    <dbReference type="NCBI Taxonomy" id="456481"/>
    <lineage>
        <taxon>Bacteria</taxon>
        <taxon>Pseudomonadati</taxon>
        <taxon>Spirochaetota</taxon>
        <taxon>Spirochaetia</taxon>
        <taxon>Leptospirales</taxon>
        <taxon>Leptospiraceae</taxon>
        <taxon>Leptospira</taxon>
    </lineage>
</organism>
<evidence type="ECO:0000255" key="1">
    <source>
        <dbReference type="HAMAP-Rule" id="MF_01517"/>
    </source>
</evidence>
<gene>
    <name evidence="1" type="primary">mdh</name>
    <name type="ordered locus">LEPBI_I1144</name>
</gene>
<sequence length="327" mass="34931">MSKKVKVAVTGAAGQIGYALLFRIASGQMFGPDTAVELQLLELEQAIPAAKGVIMELDDCAFPLLEKVSVSSNIDEAFRDINWALLVGSVPRKAGMERGDLLKINGGIFTTQGKAIEKNAASDVRVLVVGNPCNTNALIAMNNAKGVPSDRWFAMTGLDENRAKTQLAQKAGVLVKDVSNVAIWGNHSATQYPDFFNAKVNGKPATDVISDHDWLKGDFISTVQKRGAAIIAARGASSAASAANAVVDTVHNIVTPTKPGDWFSAACHSNGEYGVDKGLIFGYPLKSDGKKVEIVTGLEINAFGKEKFDITHNELKEERNEVKDMLG</sequence>
<proteinExistence type="inferred from homology"/>
<protein>
    <recommendedName>
        <fullName evidence="1">Malate dehydrogenase</fullName>
        <ecNumber evidence="1">1.1.1.37</ecNumber>
    </recommendedName>
</protein>
<feature type="chain" id="PRO_1000191624" description="Malate dehydrogenase">
    <location>
        <begin position="1"/>
        <end position="327"/>
    </location>
</feature>
<feature type="active site" description="Proton acceptor" evidence="1">
    <location>
        <position position="187"/>
    </location>
</feature>
<feature type="binding site" evidence="1">
    <location>
        <begin position="11"/>
        <end position="17"/>
    </location>
    <ligand>
        <name>NAD(+)</name>
        <dbReference type="ChEBI" id="CHEBI:57540"/>
    </ligand>
</feature>
<feature type="binding site" evidence="1">
    <location>
        <position position="92"/>
    </location>
    <ligand>
        <name>substrate</name>
    </ligand>
</feature>
<feature type="binding site" evidence="1">
    <location>
        <position position="98"/>
    </location>
    <ligand>
        <name>substrate</name>
    </ligand>
</feature>
<feature type="binding site" evidence="1">
    <location>
        <position position="105"/>
    </location>
    <ligand>
        <name>NAD(+)</name>
        <dbReference type="ChEBI" id="CHEBI:57540"/>
    </ligand>
</feature>
<feature type="binding site" evidence="1">
    <location>
        <position position="112"/>
    </location>
    <ligand>
        <name>NAD(+)</name>
        <dbReference type="ChEBI" id="CHEBI:57540"/>
    </ligand>
</feature>
<feature type="binding site" evidence="1">
    <location>
        <begin position="129"/>
        <end position="131"/>
    </location>
    <ligand>
        <name>NAD(+)</name>
        <dbReference type="ChEBI" id="CHEBI:57540"/>
    </ligand>
</feature>
<feature type="binding site" evidence="1">
    <location>
        <position position="131"/>
    </location>
    <ligand>
        <name>substrate</name>
    </ligand>
</feature>
<feature type="binding site" evidence="1">
    <location>
        <position position="162"/>
    </location>
    <ligand>
        <name>substrate</name>
    </ligand>
</feature>
<dbReference type="EC" id="1.1.1.37" evidence="1"/>
<dbReference type="EMBL" id="CP000786">
    <property type="protein sequence ID" value="ABZ97261.1"/>
    <property type="molecule type" value="Genomic_DNA"/>
</dbReference>
<dbReference type="RefSeq" id="WP_012388143.1">
    <property type="nucleotide sequence ID" value="NC_010602.1"/>
</dbReference>
<dbReference type="SMR" id="B0SN74"/>
<dbReference type="STRING" id="456481.LEPBI_I1144"/>
<dbReference type="KEGG" id="lbi:LEPBI_I1144"/>
<dbReference type="HOGENOM" id="CLU_040727_2_0_12"/>
<dbReference type="OrthoDB" id="9802969at2"/>
<dbReference type="BioCyc" id="LBIF456481:LEPBI_RS05610-MONOMER"/>
<dbReference type="Proteomes" id="UP000001847">
    <property type="component" value="Chromosome I"/>
</dbReference>
<dbReference type="GO" id="GO:0030060">
    <property type="term" value="F:L-malate dehydrogenase (NAD+) activity"/>
    <property type="evidence" value="ECO:0007669"/>
    <property type="project" value="UniProtKB-UniRule"/>
</dbReference>
<dbReference type="GO" id="GO:0006108">
    <property type="term" value="P:malate metabolic process"/>
    <property type="evidence" value="ECO:0007669"/>
    <property type="project" value="InterPro"/>
</dbReference>
<dbReference type="GO" id="GO:0006099">
    <property type="term" value="P:tricarboxylic acid cycle"/>
    <property type="evidence" value="ECO:0007669"/>
    <property type="project" value="UniProtKB-UniRule"/>
</dbReference>
<dbReference type="CDD" id="cd01338">
    <property type="entry name" value="MDH_chloroplast-like"/>
    <property type="match status" value="1"/>
</dbReference>
<dbReference type="FunFam" id="3.40.50.720:FF:000010">
    <property type="entry name" value="Malate dehydrogenase"/>
    <property type="match status" value="1"/>
</dbReference>
<dbReference type="FunFam" id="3.90.110.10:FF:000002">
    <property type="entry name" value="Malate dehydrogenase"/>
    <property type="match status" value="1"/>
</dbReference>
<dbReference type="Gene3D" id="3.90.110.10">
    <property type="entry name" value="Lactate dehydrogenase/glycoside hydrolase, family 4, C-terminal"/>
    <property type="match status" value="1"/>
</dbReference>
<dbReference type="Gene3D" id="3.40.50.720">
    <property type="entry name" value="NAD(P)-binding Rossmann-like Domain"/>
    <property type="match status" value="1"/>
</dbReference>
<dbReference type="HAMAP" id="MF_01517">
    <property type="entry name" value="Malate_dehydrog_2"/>
    <property type="match status" value="1"/>
</dbReference>
<dbReference type="InterPro" id="IPR001557">
    <property type="entry name" value="L-lactate/malate_DH"/>
</dbReference>
<dbReference type="InterPro" id="IPR022383">
    <property type="entry name" value="Lactate/malate_DH_C"/>
</dbReference>
<dbReference type="InterPro" id="IPR001236">
    <property type="entry name" value="Lactate/malate_DH_N"/>
</dbReference>
<dbReference type="InterPro" id="IPR015955">
    <property type="entry name" value="Lactate_DH/Glyco_Ohase_4_C"/>
</dbReference>
<dbReference type="InterPro" id="IPR010945">
    <property type="entry name" value="Malate_DH_type2"/>
</dbReference>
<dbReference type="InterPro" id="IPR036291">
    <property type="entry name" value="NAD(P)-bd_dom_sf"/>
</dbReference>
<dbReference type="NCBIfam" id="TIGR01759">
    <property type="entry name" value="MalateDH-SF1"/>
    <property type="match status" value="1"/>
</dbReference>
<dbReference type="NCBIfam" id="NF003916">
    <property type="entry name" value="PRK05442.1"/>
    <property type="match status" value="1"/>
</dbReference>
<dbReference type="PANTHER" id="PTHR23382">
    <property type="entry name" value="MALATE DEHYDROGENASE"/>
    <property type="match status" value="1"/>
</dbReference>
<dbReference type="Pfam" id="PF02866">
    <property type="entry name" value="Ldh_1_C"/>
    <property type="match status" value="1"/>
</dbReference>
<dbReference type="Pfam" id="PF00056">
    <property type="entry name" value="Ldh_1_N"/>
    <property type="match status" value="1"/>
</dbReference>
<dbReference type="PIRSF" id="PIRSF000102">
    <property type="entry name" value="Lac_mal_DH"/>
    <property type="match status" value="1"/>
</dbReference>
<dbReference type="SUPFAM" id="SSF56327">
    <property type="entry name" value="LDH C-terminal domain-like"/>
    <property type="match status" value="1"/>
</dbReference>
<dbReference type="SUPFAM" id="SSF51735">
    <property type="entry name" value="NAD(P)-binding Rossmann-fold domains"/>
    <property type="match status" value="1"/>
</dbReference>
<accession>B0SN74</accession>
<keyword id="KW-0520">NAD</keyword>
<keyword id="KW-0560">Oxidoreductase</keyword>
<keyword id="KW-1185">Reference proteome</keyword>
<keyword id="KW-0816">Tricarboxylic acid cycle</keyword>